<sequence>MKVVIEADGGSRGNPGPAGYGAVVWTADHSTVLAESKQAIGRATNNVAEYRGLIAGLDDAVKLGATEAAVLMDSKLVVEQMSGRWKVKHPDLLKLYVQAQALASQFRRINYEWVPRARNTYADRLANDAMDAAAQSAAADADPAKIVATESPTSPGWTGARGTPTRLLLLRHGQTELSEQRRYSGRGNPGLNEVGWRQVGAAAGYLARRGGIAAVVSSPLQRAYDTAVTAARALALDVVVDDDLVETDFGAWEGLTFAEAAERDPELHRRWLQDTSITPPGGESFDDVLRRVRRGRDRIIVGYEGATVLVVSHVTPIKMLLRLALDAGSGVLYRLHLDLASLSIAEFYADGASSVRLVNQTGYL</sequence>
<keyword id="KW-1185">Reference proteome</keyword>
<reference key="1">
    <citation type="journal article" date="2002" name="J. Bacteriol.">
        <title>Whole-genome comparison of Mycobacterium tuberculosis clinical and laboratory strains.</title>
        <authorList>
            <person name="Fleischmann R.D."/>
            <person name="Alland D."/>
            <person name="Eisen J.A."/>
            <person name="Carpenter L."/>
            <person name="White O."/>
            <person name="Peterson J.D."/>
            <person name="DeBoy R.T."/>
            <person name="Dodson R.J."/>
            <person name="Gwinn M.L."/>
            <person name="Haft D.H."/>
            <person name="Hickey E.K."/>
            <person name="Kolonay J.F."/>
            <person name="Nelson W.C."/>
            <person name="Umayam L.A."/>
            <person name="Ermolaeva M.D."/>
            <person name="Salzberg S.L."/>
            <person name="Delcher A."/>
            <person name="Utterback T.R."/>
            <person name="Weidman J.F."/>
            <person name="Khouri H.M."/>
            <person name="Gill J."/>
            <person name="Mikula A."/>
            <person name="Bishai W."/>
            <person name="Jacobs W.R. Jr."/>
            <person name="Venter J.C."/>
            <person name="Fraser C.M."/>
        </authorList>
    </citation>
    <scope>NUCLEOTIDE SEQUENCE [LARGE SCALE GENOMIC DNA]</scope>
    <source>
        <strain>CDC 1551 / Oshkosh</strain>
    </source>
</reference>
<proteinExistence type="predicted"/>
<accession>P9WLH4</accession>
<accession>L0TBW1</accession>
<accession>P64955</accession>
<accession>Q10512</accession>
<name>Y2228_MYCTO</name>
<feature type="chain" id="PRO_0000427478" description="Uncharacterized protein MT2287">
    <location>
        <begin position="1"/>
        <end position="364"/>
    </location>
</feature>
<feature type="domain" description="RNase H type-1" evidence="1">
    <location>
        <begin position="1"/>
        <end position="139"/>
    </location>
</feature>
<gene>
    <name type="ordered locus">MT2287</name>
</gene>
<organism>
    <name type="scientific">Mycobacterium tuberculosis (strain CDC 1551 / Oshkosh)</name>
    <dbReference type="NCBI Taxonomy" id="83331"/>
    <lineage>
        <taxon>Bacteria</taxon>
        <taxon>Bacillati</taxon>
        <taxon>Actinomycetota</taxon>
        <taxon>Actinomycetes</taxon>
        <taxon>Mycobacteriales</taxon>
        <taxon>Mycobacteriaceae</taxon>
        <taxon>Mycobacterium</taxon>
        <taxon>Mycobacterium tuberculosis complex</taxon>
    </lineage>
</organism>
<dbReference type="EMBL" id="AE000516">
    <property type="protein sequence ID" value="AAK46573.1"/>
    <property type="molecule type" value="Genomic_DNA"/>
</dbReference>
<dbReference type="PIR" id="H70776">
    <property type="entry name" value="H70776"/>
</dbReference>
<dbReference type="RefSeq" id="WP_003899226.1">
    <property type="nucleotide sequence ID" value="NZ_KK341227.1"/>
</dbReference>
<dbReference type="SMR" id="P9WLH4"/>
<dbReference type="KEGG" id="mtc:MT2287"/>
<dbReference type="PATRIC" id="fig|83331.31.peg.2462"/>
<dbReference type="HOGENOM" id="CLU_035712_0_0_11"/>
<dbReference type="Proteomes" id="UP000001020">
    <property type="component" value="Chromosome"/>
</dbReference>
<dbReference type="GO" id="GO:0005737">
    <property type="term" value="C:cytoplasm"/>
    <property type="evidence" value="ECO:0007669"/>
    <property type="project" value="TreeGrafter"/>
</dbReference>
<dbReference type="GO" id="GO:0003676">
    <property type="term" value="F:nucleic acid binding"/>
    <property type="evidence" value="ECO:0007669"/>
    <property type="project" value="InterPro"/>
</dbReference>
<dbReference type="GO" id="GO:0016791">
    <property type="term" value="F:phosphatase activity"/>
    <property type="evidence" value="ECO:0007669"/>
    <property type="project" value="TreeGrafter"/>
</dbReference>
<dbReference type="GO" id="GO:0004523">
    <property type="term" value="F:RNA-DNA hybrid ribonuclease activity"/>
    <property type="evidence" value="ECO:0007669"/>
    <property type="project" value="InterPro"/>
</dbReference>
<dbReference type="CDD" id="cd07067">
    <property type="entry name" value="HP_PGM_like"/>
    <property type="match status" value="1"/>
</dbReference>
<dbReference type="CDD" id="cd09279">
    <property type="entry name" value="RNase_HI_like"/>
    <property type="match status" value="1"/>
</dbReference>
<dbReference type="FunFam" id="3.40.50.1240:FF:000060">
    <property type="entry name" value="Bifunctional RNase H/acid phosphatase"/>
    <property type="match status" value="1"/>
</dbReference>
<dbReference type="FunFam" id="3.30.420.10:FF:000076">
    <property type="entry name" value="RBR-type E3 ubiquitin transferase"/>
    <property type="match status" value="1"/>
</dbReference>
<dbReference type="Gene3D" id="3.40.50.1240">
    <property type="entry name" value="Phosphoglycerate mutase-like"/>
    <property type="match status" value="1"/>
</dbReference>
<dbReference type="Gene3D" id="3.30.420.10">
    <property type="entry name" value="Ribonuclease H-like superfamily/Ribonuclease H"/>
    <property type="match status" value="1"/>
</dbReference>
<dbReference type="InterPro" id="IPR013078">
    <property type="entry name" value="His_Pase_superF_clade-1"/>
</dbReference>
<dbReference type="InterPro" id="IPR029033">
    <property type="entry name" value="His_PPase_superfam"/>
</dbReference>
<dbReference type="InterPro" id="IPR050275">
    <property type="entry name" value="PGM_Phosphatase"/>
</dbReference>
<dbReference type="InterPro" id="IPR012337">
    <property type="entry name" value="RNaseH-like_sf"/>
</dbReference>
<dbReference type="InterPro" id="IPR014636">
    <property type="entry name" value="RNaseH/PGlycerate_mutase"/>
</dbReference>
<dbReference type="InterPro" id="IPR002156">
    <property type="entry name" value="RNaseH_domain"/>
</dbReference>
<dbReference type="InterPro" id="IPR036397">
    <property type="entry name" value="RNaseH_sf"/>
</dbReference>
<dbReference type="NCBIfam" id="NF005567">
    <property type="entry name" value="PRK07238.1"/>
    <property type="match status" value="1"/>
</dbReference>
<dbReference type="PANTHER" id="PTHR48100">
    <property type="entry name" value="BROAD-SPECIFICITY PHOSPHATASE YOR283W-RELATED"/>
    <property type="match status" value="1"/>
</dbReference>
<dbReference type="PANTHER" id="PTHR48100:SF62">
    <property type="entry name" value="GLUCOSYL-3-PHOSPHOGLYCERATE PHOSPHATASE"/>
    <property type="match status" value="1"/>
</dbReference>
<dbReference type="Pfam" id="PF00300">
    <property type="entry name" value="His_Phos_1"/>
    <property type="match status" value="1"/>
</dbReference>
<dbReference type="Pfam" id="PF13456">
    <property type="entry name" value="RVT_3"/>
    <property type="match status" value="1"/>
</dbReference>
<dbReference type="PIRSF" id="PIRSF036922">
    <property type="entry name" value="RNaseH_PGAM"/>
    <property type="match status" value="1"/>
</dbReference>
<dbReference type="SMART" id="SM00855">
    <property type="entry name" value="PGAM"/>
    <property type="match status" value="1"/>
</dbReference>
<dbReference type="SUPFAM" id="SSF53254">
    <property type="entry name" value="Phosphoglycerate mutase-like"/>
    <property type="match status" value="1"/>
</dbReference>
<dbReference type="SUPFAM" id="SSF53098">
    <property type="entry name" value="Ribonuclease H-like"/>
    <property type="match status" value="1"/>
</dbReference>
<dbReference type="PROSITE" id="PS50879">
    <property type="entry name" value="RNASE_H_1"/>
    <property type="match status" value="1"/>
</dbReference>
<evidence type="ECO:0000255" key="1">
    <source>
        <dbReference type="PROSITE-ProRule" id="PRU00408"/>
    </source>
</evidence>
<protein>
    <recommendedName>
        <fullName>Uncharacterized protein MT2287</fullName>
    </recommendedName>
</protein>